<proteinExistence type="inferred from homology"/>
<gene>
    <name evidence="1" type="primary">obg</name>
    <name type="ordered locus">GOX0141</name>
</gene>
<feature type="chain" id="PRO_0000385958" description="GTPase Obg">
    <location>
        <begin position="1"/>
        <end position="336"/>
    </location>
</feature>
<feature type="domain" description="Obg" evidence="2">
    <location>
        <begin position="1"/>
        <end position="159"/>
    </location>
</feature>
<feature type="domain" description="OBG-type G" evidence="1">
    <location>
        <begin position="160"/>
        <end position="328"/>
    </location>
</feature>
<feature type="binding site" evidence="1">
    <location>
        <begin position="166"/>
        <end position="173"/>
    </location>
    <ligand>
        <name>GTP</name>
        <dbReference type="ChEBI" id="CHEBI:37565"/>
    </ligand>
</feature>
<feature type="binding site" evidence="1">
    <location>
        <position position="173"/>
    </location>
    <ligand>
        <name>Mg(2+)</name>
        <dbReference type="ChEBI" id="CHEBI:18420"/>
    </ligand>
</feature>
<feature type="binding site" evidence="1">
    <location>
        <begin position="191"/>
        <end position="195"/>
    </location>
    <ligand>
        <name>GTP</name>
        <dbReference type="ChEBI" id="CHEBI:37565"/>
    </ligand>
</feature>
<feature type="binding site" evidence="1">
    <location>
        <position position="193"/>
    </location>
    <ligand>
        <name>Mg(2+)</name>
        <dbReference type="ChEBI" id="CHEBI:18420"/>
    </ligand>
</feature>
<feature type="binding site" evidence="1">
    <location>
        <begin position="213"/>
        <end position="216"/>
    </location>
    <ligand>
        <name>GTP</name>
        <dbReference type="ChEBI" id="CHEBI:37565"/>
    </ligand>
</feature>
<feature type="binding site" evidence="1">
    <location>
        <begin position="280"/>
        <end position="283"/>
    </location>
    <ligand>
        <name>GTP</name>
        <dbReference type="ChEBI" id="CHEBI:37565"/>
    </ligand>
</feature>
<feature type="binding site" evidence="1">
    <location>
        <begin position="309"/>
        <end position="311"/>
    </location>
    <ligand>
        <name>GTP</name>
        <dbReference type="ChEBI" id="CHEBI:37565"/>
    </ligand>
</feature>
<organism>
    <name type="scientific">Gluconobacter oxydans (strain 621H)</name>
    <name type="common">Gluconobacter suboxydans</name>
    <dbReference type="NCBI Taxonomy" id="290633"/>
    <lineage>
        <taxon>Bacteria</taxon>
        <taxon>Pseudomonadati</taxon>
        <taxon>Pseudomonadota</taxon>
        <taxon>Alphaproteobacteria</taxon>
        <taxon>Acetobacterales</taxon>
        <taxon>Acetobacteraceae</taxon>
        <taxon>Gluconobacter</taxon>
    </lineage>
</organism>
<protein>
    <recommendedName>
        <fullName evidence="1">GTPase Obg</fullName>
        <ecNumber evidence="1">3.6.5.-</ecNumber>
    </recommendedName>
    <alternativeName>
        <fullName evidence="1">GTP-binding protein Obg</fullName>
    </alternativeName>
</protein>
<keyword id="KW-0963">Cytoplasm</keyword>
<keyword id="KW-0342">GTP-binding</keyword>
<keyword id="KW-0378">Hydrolase</keyword>
<keyword id="KW-0460">Magnesium</keyword>
<keyword id="KW-0479">Metal-binding</keyword>
<keyword id="KW-0547">Nucleotide-binding</keyword>
<keyword id="KW-1185">Reference proteome</keyword>
<reference key="1">
    <citation type="journal article" date="2005" name="Nat. Biotechnol.">
        <title>Complete genome sequence of the acetic acid bacterium Gluconobacter oxydans.</title>
        <authorList>
            <person name="Prust C."/>
            <person name="Hoffmeister M."/>
            <person name="Liesegang H."/>
            <person name="Wiezer A."/>
            <person name="Fricke W.F."/>
            <person name="Ehrenreich A."/>
            <person name="Gottschalk G."/>
            <person name="Deppenmeier U."/>
        </authorList>
    </citation>
    <scope>NUCLEOTIDE SEQUENCE [LARGE SCALE GENOMIC DNA]</scope>
    <source>
        <strain>621H</strain>
    </source>
</reference>
<evidence type="ECO:0000255" key="1">
    <source>
        <dbReference type="HAMAP-Rule" id="MF_01454"/>
    </source>
</evidence>
<evidence type="ECO:0000255" key="2">
    <source>
        <dbReference type="PROSITE-ProRule" id="PRU01231"/>
    </source>
</evidence>
<evidence type="ECO:0000305" key="3"/>
<dbReference type="EC" id="3.6.5.-" evidence="1"/>
<dbReference type="EMBL" id="CP000009">
    <property type="protein sequence ID" value="AAW59934.1"/>
    <property type="status" value="ALT_INIT"/>
    <property type="molecule type" value="Genomic_DNA"/>
</dbReference>
<dbReference type="SMR" id="Q5FUL2"/>
<dbReference type="STRING" id="290633.GOX0141"/>
<dbReference type="KEGG" id="gox:GOX0141"/>
<dbReference type="eggNOG" id="COG0536">
    <property type="taxonomic scope" value="Bacteria"/>
</dbReference>
<dbReference type="HOGENOM" id="CLU_011747_2_0_5"/>
<dbReference type="Proteomes" id="UP000006375">
    <property type="component" value="Chromosome"/>
</dbReference>
<dbReference type="GO" id="GO:0005737">
    <property type="term" value="C:cytoplasm"/>
    <property type="evidence" value="ECO:0007669"/>
    <property type="project" value="UniProtKB-SubCell"/>
</dbReference>
<dbReference type="GO" id="GO:0005525">
    <property type="term" value="F:GTP binding"/>
    <property type="evidence" value="ECO:0007669"/>
    <property type="project" value="UniProtKB-UniRule"/>
</dbReference>
<dbReference type="GO" id="GO:0003924">
    <property type="term" value="F:GTPase activity"/>
    <property type="evidence" value="ECO:0007669"/>
    <property type="project" value="UniProtKB-UniRule"/>
</dbReference>
<dbReference type="GO" id="GO:0000287">
    <property type="term" value="F:magnesium ion binding"/>
    <property type="evidence" value="ECO:0007669"/>
    <property type="project" value="InterPro"/>
</dbReference>
<dbReference type="GO" id="GO:0042254">
    <property type="term" value="P:ribosome biogenesis"/>
    <property type="evidence" value="ECO:0007669"/>
    <property type="project" value="UniProtKB-UniRule"/>
</dbReference>
<dbReference type="CDD" id="cd01898">
    <property type="entry name" value="Obg"/>
    <property type="match status" value="1"/>
</dbReference>
<dbReference type="FunFam" id="2.70.210.12:FF:000001">
    <property type="entry name" value="GTPase Obg"/>
    <property type="match status" value="1"/>
</dbReference>
<dbReference type="Gene3D" id="2.70.210.12">
    <property type="entry name" value="GTP1/OBG domain"/>
    <property type="match status" value="1"/>
</dbReference>
<dbReference type="Gene3D" id="3.40.50.300">
    <property type="entry name" value="P-loop containing nucleotide triphosphate hydrolases"/>
    <property type="match status" value="1"/>
</dbReference>
<dbReference type="HAMAP" id="MF_01454">
    <property type="entry name" value="GTPase_Obg"/>
    <property type="match status" value="1"/>
</dbReference>
<dbReference type="InterPro" id="IPR031167">
    <property type="entry name" value="G_OBG"/>
</dbReference>
<dbReference type="InterPro" id="IPR006073">
    <property type="entry name" value="GTP-bd"/>
</dbReference>
<dbReference type="InterPro" id="IPR014100">
    <property type="entry name" value="GTP-bd_Obg/CgtA"/>
</dbReference>
<dbReference type="InterPro" id="IPR006074">
    <property type="entry name" value="GTP1-OBG_CS"/>
</dbReference>
<dbReference type="InterPro" id="IPR006169">
    <property type="entry name" value="GTP1_OBG_dom"/>
</dbReference>
<dbReference type="InterPro" id="IPR036726">
    <property type="entry name" value="GTP1_OBG_dom_sf"/>
</dbReference>
<dbReference type="InterPro" id="IPR045086">
    <property type="entry name" value="OBG_GTPase"/>
</dbReference>
<dbReference type="InterPro" id="IPR027417">
    <property type="entry name" value="P-loop_NTPase"/>
</dbReference>
<dbReference type="NCBIfam" id="TIGR02729">
    <property type="entry name" value="Obg_CgtA"/>
    <property type="match status" value="1"/>
</dbReference>
<dbReference type="NCBIfam" id="NF008955">
    <property type="entry name" value="PRK12297.1"/>
    <property type="match status" value="1"/>
</dbReference>
<dbReference type="NCBIfam" id="NF008956">
    <property type="entry name" value="PRK12299.1"/>
    <property type="match status" value="1"/>
</dbReference>
<dbReference type="PANTHER" id="PTHR11702">
    <property type="entry name" value="DEVELOPMENTALLY REGULATED GTP-BINDING PROTEIN-RELATED"/>
    <property type="match status" value="1"/>
</dbReference>
<dbReference type="PANTHER" id="PTHR11702:SF31">
    <property type="entry name" value="MITOCHONDRIAL RIBOSOME-ASSOCIATED GTPASE 2"/>
    <property type="match status" value="1"/>
</dbReference>
<dbReference type="Pfam" id="PF01018">
    <property type="entry name" value="GTP1_OBG"/>
    <property type="match status" value="1"/>
</dbReference>
<dbReference type="Pfam" id="PF01926">
    <property type="entry name" value="MMR_HSR1"/>
    <property type="match status" value="1"/>
</dbReference>
<dbReference type="PIRSF" id="PIRSF002401">
    <property type="entry name" value="GTP_bd_Obg/CgtA"/>
    <property type="match status" value="1"/>
</dbReference>
<dbReference type="PRINTS" id="PR00326">
    <property type="entry name" value="GTP1OBG"/>
</dbReference>
<dbReference type="SUPFAM" id="SSF82051">
    <property type="entry name" value="Obg GTP-binding protein N-terminal domain"/>
    <property type="match status" value="1"/>
</dbReference>
<dbReference type="SUPFAM" id="SSF52540">
    <property type="entry name" value="P-loop containing nucleoside triphosphate hydrolases"/>
    <property type="match status" value="1"/>
</dbReference>
<dbReference type="PROSITE" id="PS51710">
    <property type="entry name" value="G_OBG"/>
    <property type="match status" value="1"/>
</dbReference>
<dbReference type="PROSITE" id="PS00905">
    <property type="entry name" value="GTP1_OBG"/>
    <property type="match status" value="1"/>
</dbReference>
<dbReference type="PROSITE" id="PS51883">
    <property type="entry name" value="OBG"/>
    <property type="match status" value="1"/>
</dbReference>
<accession>Q5FUL2</accession>
<comment type="function">
    <text evidence="1">An essential GTPase which binds GTP, GDP and possibly (p)ppGpp with moderate affinity, with high nucleotide exchange rates and a fairly low GTP hydrolysis rate. Plays a role in control of the cell cycle, stress response, ribosome biogenesis and in those bacteria that undergo differentiation, in morphogenesis control.</text>
</comment>
<comment type="cofactor">
    <cofactor evidence="1">
        <name>Mg(2+)</name>
        <dbReference type="ChEBI" id="CHEBI:18420"/>
    </cofactor>
</comment>
<comment type="subunit">
    <text evidence="1">Monomer.</text>
</comment>
<comment type="subcellular location">
    <subcellularLocation>
        <location evidence="1">Cytoplasm</location>
    </subcellularLocation>
</comment>
<comment type="similarity">
    <text evidence="1">Belongs to the TRAFAC class OBG-HflX-like GTPase superfamily. OBG GTPase family.</text>
</comment>
<comment type="sequence caution" evidence="3">
    <conflict type="erroneous initiation">
        <sequence resource="EMBL-CDS" id="AAW59934"/>
    </conflict>
    <text>Extended N-terminus.</text>
</comment>
<sequence>MKFLDQAKIYVRSGDGGDGVIAFRREKYIEFGGPDGGDGGRGGDIIFRAVPGLNTLIDFRYTQHFKARKGGNGAGSNRTGAAAANVTINVPVGTQIFDEDRETLLADLDAEGKEVLLCRGGDGGLGNTHFKSSTNRAPRRADKGWPGEERWVWLRLKLIADIGLVGLPNAGKSTLLSVASRARPKIADYPFTTLHPQLGVVRLNNTEEFVIADIPGLIEGASEGAGLGDRFLGHVERCATLLHLIDGTESQIVKHWRLIRKELEAYDPELAAKPEIIVLNKCDSLTPTQRSAKKRALAKASGAEVMMLSGATQEGLPELLRLLQDRVTAAKRDRQG</sequence>
<name>OBG_GLUOX</name>